<name>SYI_ONYPE</name>
<dbReference type="EC" id="6.1.1.5" evidence="1"/>
<dbReference type="EMBL" id="AP006628">
    <property type="protein sequence ID" value="BAD04269.1"/>
    <property type="molecule type" value="Genomic_DNA"/>
</dbReference>
<dbReference type="SMR" id="Q6YR34"/>
<dbReference type="STRING" id="262768.PAM_184"/>
<dbReference type="KEGG" id="poy:PAM_184"/>
<dbReference type="eggNOG" id="COG0060">
    <property type="taxonomic scope" value="Bacteria"/>
</dbReference>
<dbReference type="HOGENOM" id="CLU_001493_7_1_14"/>
<dbReference type="BioCyc" id="OYEL262768:G1G26-225-MONOMER"/>
<dbReference type="Proteomes" id="UP000002523">
    <property type="component" value="Chromosome"/>
</dbReference>
<dbReference type="GO" id="GO:0005829">
    <property type="term" value="C:cytosol"/>
    <property type="evidence" value="ECO:0007669"/>
    <property type="project" value="TreeGrafter"/>
</dbReference>
<dbReference type="GO" id="GO:0002161">
    <property type="term" value="F:aminoacyl-tRNA deacylase activity"/>
    <property type="evidence" value="ECO:0007669"/>
    <property type="project" value="InterPro"/>
</dbReference>
<dbReference type="GO" id="GO:0005524">
    <property type="term" value="F:ATP binding"/>
    <property type="evidence" value="ECO:0007669"/>
    <property type="project" value="UniProtKB-UniRule"/>
</dbReference>
<dbReference type="GO" id="GO:0004822">
    <property type="term" value="F:isoleucine-tRNA ligase activity"/>
    <property type="evidence" value="ECO:0007669"/>
    <property type="project" value="UniProtKB-UniRule"/>
</dbReference>
<dbReference type="GO" id="GO:0000049">
    <property type="term" value="F:tRNA binding"/>
    <property type="evidence" value="ECO:0007669"/>
    <property type="project" value="InterPro"/>
</dbReference>
<dbReference type="GO" id="GO:0008270">
    <property type="term" value="F:zinc ion binding"/>
    <property type="evidence" value="ECO:0007669"/>
    <property type="project" value="UniProtKB-UniRule"/>
</dbReference>
<dbReference type="GO" id="GO:0006428">
    <property type="term" value="P:isoleucyl-tRNA aminoacylation"/>
    <property type="evidence" value="ECO:0007669"/>
    <property type="project" value="UniProtKB-UniRule"/>
</dbReference>
<dbReference type="CDD" id="cd07960">
    <property type="entry name" value="Anticodon_Ia_Ile_BEm"/>
    <property type="match status" value="1"/>
</dbReference>
<dbReference type="CDD" id="cd00818">
    <property type="entry name" value="IleRS_core"/>
    <property type="match status" value="1"/>
</dbReference>
<dbReference type="FunFam" id="3.40.50.620:FF:000152">
    <property type="entry name" value="Isoleucine--tRNA ligase"/>
    <property type="match status" value="1"/>
</dbReference>
<dbReference type="Gene3D" id="1.10.730.20">
    <property type="match status" value="1"/>
</dbReference>
<dbReference type="Gene3D" id="3.40.50.620">
    <property type="entry name" value="HUPs"/>
    <property type="match status" value="2"/>
</dbReference>
<dbReference type="Gene3D" id="1.10.10.830">
    <property type="entry name" value="Ile-tRNA synthetase CP2 domain-like"/>
    <property type="match status" value="1"/>
</dbReference>
<dbReference type="HAMAP" id="MF_02002">
    <property type="entry name" value="Ile_tRNA_synth_type1"/>
    <property type="match status" value="1"/>
</dbReference>
<dbReference type="InterPro" id="IPR001412">
    <property type="entry name" value="aa-tRNA-synth_I_CS"/>
</dbReference>
<dbReference type="InterPro" id="IPR002300">
    <property type="entry name" value="aa-tRNA-synth_Ia"/>
</dbReference>
<dbReference type="InterPro" id="IPR033708">
    <property type="entry name" value="Anticodon_Ile_BEm"/>
</dbReference>
<dbReference type="InterPro" id="IPR002301">
    <property type="entry name" value="Ile-tRNA-ligase"/>
</dbReference>
<dbReference type="InterPro" id="IPR023585">
    <property type="entry name" value="Ile-tRNA-ligase_type1"/>
</dbReference>
<dbReference type="InterPro" id="IPR050081">
    <property type="entry name" value="Ile-tRNA_ligase"/>
</dbReference>
<dbReference type="InterPro" id="IPR013155">
    <property type="entry name" value="M/V/L/I-tRNA-synth_anticd-bd"/>
</dbReference>
<dbReference type="InterPro" id="IPR014729">
    <property type="entry name" value="Rossmann-like_a/b/a_fold"/>
</dbReference>
<dbReference type="InterPro" id="IPR009080">
    <property type="entry name" value="tRNAsynth_Ia_anticodon-bd"/>
</dbReference>
<dbReference type="InterPro" id="IPR009008">
    <property type="entry name" value="Val/Leu/Ile-tRNA-synth_edit"/>
</dbReference>
<dbReference type="NCBIfam" id="TIGR00392">
    <property type="entry name" value="ileS"/>
    <property type="match status" value="1"/>
</dbReference>
<dbReference type="PANTHER" id="PTHR42765:SF1">
    <property type="entry name" value="ISOLEUCINE--TRNA LIGASE, MITOCHONDRIAL"/>
    <property type="match status" value="1"/>
</dbReference>
<dbReference type="PANTHER" id="PTHR42765">
    <property type="entry name" value="SOLEUCYL-TRNA SYNTHETASE"/>
    <property type="match status" value="1"/>
</dbReference>
<dbReference type="Pfam" id="PF08264">
    <property type="entry name" value="Anticodon_1"/>
    <property type="match status" value="1"/>
</dbReference>
<dbReference type="Pfam" id="PF00133">
    <property type="entry name" value="tRNA-synt_1"/>
    <property type="match status" value="1"/>
</dbReference>
<dbReference type="PRINTS" id="PR00984">
    <property type="entry name" value="TRNASYNTHILE"/>
</dbReference>
<dbReference type="SUPFAM" id="SSF47323">
    <property type="entry name" value="Anticodon-binding domain of a subclass of class I aminoacyl-tRNA synthetases"/>
    <property type="match status" value="1"/>
</dbReference>
<dbReference type="SUPFAM" id="SSF52374">
    <property type="entry name" value="Nucleotidylyl transferase"/>
    <property type="match status" value="1"/>
</dbReference>
<dbReference type="SUPFAM" id="SSF50677">
    <property type="entry name" value="ValRS/IleRS/LeuRS editing domain"/>
    <property type="match status" value="1"/>
</dbReference>
<dbReference type="PROSITE" id="PS00178">
    <property type="entry name" value="AA_TRNA_LIGASE_I"/>
    <property type="match status" value="1"/>
</dbReference>
<gene>
    <name evidence="1" type="primary">ileS</name>
    <name type="ordered locus">PAM_184</name>
</gene>
<comment type="function">
    <text evidence="1">Catalyzes the attachment of isoleucine to tRNA(Ile). As IleRS can inadvertently accommodate and process structurally similar amino acids such as valine, to avoid such errors it has two additional distinct tRNA(Ile)-dependent editing activities. One activity is designated as 'pretransfer' editing and involves the hydrolysis of activated Val-AMP. The other activity is designated 'posttransfer' editing and involves deacylation of mischarged Val-tRNA(Ile).</text>
</comment>
<comment type="catalytic activity">
    <reaction evidence="1">
        <text>tRNA(Ile) + L-isoleucine + ATP = L-isoleucyl-tRNA(Ile) + AMP + diphosphate</text>
        <dbReference type="Rhea" id="RHEA:11060"/>
        <dbReference type="Rhea" id="RHEA-COMP:9666"/>
        <dbReference type="Rhea" id="RHEA-COMP:9695"/>
        <dbReference type="ChEBI" id="CHEBI:30616"/>
        <dbReference type="ChEBI" id="CHEBI:33019"/>
        <dbReference type="ChEBI" id="CHEBI:58045"/>
        <dbReference type="ChEBI" id="CHEBI:78442"/>
        <dbReference type="ChEBI" id="CHEBI:78528"/>
        <dbReference type="ChEBI" id="CHEBI:456215"/>
        <dbReference type="EC" id="6.1.1.5"/>
    </reaction>
</comment>
<comment type="cofactor">
    <cofactor evidence="1">
        <name>Zn(2+)</name>
        <dbReference type="ChEBI" id="CHEBI:29105"/>
    </cofactor>
    <text evidence="1">Binds 1 zinc ion per subunit.</text>
</comment>
<comment type="subunit">
    <text evidence="1">Monomer.</text>
</comment>
<comment type="subcellular location">
    <subcellularLocation>
        <location evidence="1">Cytoplasm</location>
    </subcellularLocation>
</comment>
<comment type="domain">
    <text evidence="1">IleRS has two distinct active sites: one for aminoacylation and one for editing. The misactivated valine is translocated from the active site to the editing site, which sterically excludes the correctly activated isoleucine. The single editing site contains two valyl binding pockets, one specific for each substrate (Val-AMP or Val-tRNA(Ile)).</text>
</comment>
<comment type="similarity">
    <text evidence="1">Belongs to the class-I aminoacyl-tRNA synthetase family. IleS type 1 subfamily.</text>
</comment>
<protein>
    <recommendedName>
        <fullName evidence="1">Isoleucine--tRNA ligase</fullName>
        <ecNumber evidence="1">6.1.1.5</ecNumber>
    </recommendedName>
    <alternativeName>
        <fullName evidence="1">Isoleucyl-tRNA synthetase</fullName>
        <shortName evidence="1">IleRS</shortName>
    </alternativeName>
</protein>
<reference key="1">
    <citation type="journal article" date="2004" name="Nat. Genet.">
        <title>Reductive evolution suggested from the complete genome sequence of a plant-pathogenic phytoplasma.</title>
        <authorList>
            <person name="Oshima K."/>
            <person name="Kakizawa S."/>
            <person name="Nishigawa H."/>
            <person name="Jung H.-Y."/>
            <person name="Wei W."/>
            <person name="Suzuki S."/>
            <person name="Arashida R."/>
            <person name="Nakata D."/>
            <person name="Miyata S."/>
            <person name="Ugaki M."/>
            <person name="Namba S."/>
        </authorList>
    </citation>
    <scope>NUCLEOTIDE SEQUENCE [LARGE SCALE GENOMIC DNA]</scope>
    <source>
        <strain>OY-M</strain>
    </source>
</reference>
<accession>Q6YR34</accession>
<sequence length="900" mass="104373">MTTNYKTTLLMPKTDFPMKGNLGKNEINIQKHWQKLDLYQKKLQQNQDNNPFILHDGPPYANGNIHMGHALNKILKDFIVRFRSMQGFYTPLIPGWDTHGLPIEAAVLKKTSKNAFTRKPLLDKCQEFALENVNNQKHQFQRLGILGDWQNPYLTLDKTFVSDQVRIFGQMVDKGLIFKALKPIHWSPTLESALAEAELEYHNHQSPSVYVAFSMKKLDIFDNVALVIWTTTPWTLPANVAIAVHPEKEYQLIEVLQKRYLVGTKNIPFLQKVFAWNKENIKVVATFEGKTLEHLTYQNHLVSKFGKIILSQHVLDGEGTGLVHIAPGHGLDDFLVGQKYNLDVVCSIDKKGMMTDVSKYQGLFYTKANEAIISDLEKDHSLLKADVILHSYPHDWRTKKPVISLALPQWFVSIKKIKSLLLEETQKVKWIPRWGELKMTNMITNREDWNISRQRTWGVPIPIFYTETHQPILDLKLINHVADLFEQHGMDIWYEWDVKKLLPENYINPQSPNNLFTKELDIMDVWFDSGTSYSVFKKRNQVLQSDVYLEGSDQYRGWFNSSLITSVATQNQAPYKTVITHGFVFDGEGKKMSKSLGNVIDPLTVAEQKGADIIRLWVANTNYNLDVRINPSILKQVEDLYRKIRNTFRFMLGNLDNFKKDTNYIAFEQRTFIHQAMMLDFEEVLKNVLHSYDTYNFEGVLRHLFPFITNKISAFYLDFAKDILYIEKEDHKERKMIQSTIYDLLLSLLQVLTPIIPHTTSEVYGFFPFAVEKDIYLEKMPQLKARPTSHLLLEYHKFLTLRKNVLQYLEKARQSGLINSSLQAHITLSLTQEEMHALDVLQIKDQLHQLFIVSKVTLQLKDTFDVKVAKASGYACQRCWNVVITKPLTPLCTRCQNILK</sequence>
<feature type="chain" id="PRO_0000098433" description="Isoleucine--tRNA ligase">
    <location>
        <begin position="1"/>
        <end position="900"/>
    </location>
</feature>
<feature type="short sequence motif" description="'HIGH' region">
    <location>
        <begin position="59"/>
        <end position="69"/>
    </location>
</feature>
<feature type="short sequence motif" description="'KMSKS' region">
    <location>
        <begin position="591"/>
        <end position="595"/>
    </location>
</feature>
<feature type="binding site" evidence="1">
    <location>
        <position position="550"/>
    </location>
    <ligand>
        <name>L-isoleucyl-5'-AMP</name>
        <dbReference type="ChEBI" id="CHEBI:178002"/>
    </ligand>
</feature>
<feature type="binding site" evidence="1">
    <location>
        <position position="594"/>
    </location>
    <ligand>
        <name>ATP</name>
        <dbReference type="ChEBI" id="CHEBI:30616"/>
    </ligand>
</feature>
<feature type="binding site" evidence="1">
    <location>
        <position position="876"/>
    </location>
    <ligand>
        <name>Zn(2+)</name>
        <dbReference type="ChEBI" id="CHEBI:29105"/>
    </ligand>
</feature>
<feature type="binding site" evidence="1">
    <location>
        <position position="879"/>
    </location>
    <ligand>
        <name>Zn(2+)</name>
        <dbReference type="ChEBI" id="CHEBI:29105"/>
    </ligand>
</feature>
<feature type="binding site" evidence="1">
    <location>
        <position position="892"/>
    </location>
    <ligand>
        <name>Zn(2+)</name>
        <dbReference type="ChEBI" id="CHEBI:29105"/>
    </ligand>
</feature>
<feature type="binding site" evidence="1">
    <location>
        <position position="895"/>
    </location>
    <ligand>
        <name>Zn(2+)</name>
        <dbReference type="ChEBI" id="CHEBI:29105"/>
    </ligand>
</feature>
<proteinExistence type="inferred from homology"/>
<keyword id="KW-0030">Aminoacyl-tRNA synthetase</keyword>
<keyword id="KW-0067">ATP-binding</keyword>
<keyword id="KW-0963">Cytoplasm</keyword>
<keyword id="KW-0436">Ligase</keyword>
<keyword id="KW-0479">Metal-binding</keyword>
<keyword id="KW-0547">Nucleotide-binding</keyword>
<keyword id="KW-0648">Protein biosynthesis</keyword>
<keyword id="KW-0862">Zinc</keyword>
<organism>
    <name type="scientific">Onion yellows phytoplasma (strain OY-M)</name>
    <dbReference type="NCBI Taxonomy" id="262768"/>
    <lineage>
        <taxon>Bacteria</taxon>
        <taxon>Bacillati</taxon>
        <taxon>Mycoplasmatota</taxon>
        <taxon>Mollicutes</taxon>
        <taxon>Acholeplasmatales</taxon>
        <taxon>Acholeplasmataceae</taxon>
        <taxon>Candidatus Phytoplasma</taxon>
        <taxon>16SrI (Aster yellows group)</taxon>
    </lineage>
</organism>
<evidence type="ECO:0000255" key="1">
    <source>
        <dbReference type="HAMAP-Rule" id="MF_02002"/>
    </source>
</evidence>